<gene>
    <name evidence="1" type="primary">patD</name>
    <name type="ordered locus">ECIAI1_1440</name>
</gene>
<evidence type="ECO:0000255" key="1">
    <source>
        <dbReference type="HAMAP-Rule" id="MF_01275"/>
    </source>
</evidence>
<feature type="chain" id="PRO_1000140270" description="Gamma-aminobutyraldehyde dehydrogenase">
    <location>
        <begin position="1"/>
        <end position="474"/>
    </location>
</feature>
<feature type="active site" evidence="1">
    <location>
        <position position="246"/>
    </location>
</feature>
<feature type="active site" description="Nucleophile" evidence="1">
    <location>
        <position position="280"/>
    </location>
</feature>
<feature type="binding site" evidence="1">
    <location>
        <begin position="146"/>
        <end position="148"/>
    </location>
    <ligand>
        <name>NAD(+)</name>
        <dbReference type="ChEBI" id="CHEBI:57540"/>
    </ligand>
</feature>
<feature type="binding site" evidence="1">
    <location>
        <begin position="172"/>
        <end position="175"/>
    </location>
    <ligand>
        <name>NAD(+)</name>
        <dbReference type="ChEBI" id="CHEBI:57540"/>
    </ligand>
</feature>
<feature type="binding site" evidence="1">
    <location>
        <position position="209"/>
    </location>
    <ligand>
        <name>NAD(+)</name>
        <dbReference type="ChEBI" id="CHEBI:57540"/>
    </ligand>
</feature>
<feature type="binding site" evidence="1">
    <location>
        <begin position="225"/>
        <end position="228"/>
    </location>
    <ligand>
        <name>NAD(+)</name>
        <dbReference type="ChEBI" id="CHEBI:57540"/>
    </ligand>
</feature>
<feature type="binding site" evidence="1">
    <location>
        <position position="280"/>
    </location>
    <ligand>
        <name>NAD(+)</name>
        <dbReference type="ChEBI" id="CHEBI:57540"/>
    </ligand>
</feature>
<organism>
    <name type="scientific">Escherichia coli O8 (strain IAI1)</name>
    <dbReference type="NCBI Taxonomy" id="585034"/>
    <lineage>
        <taxon>Bacteria</taxon>
        <taxon>Pseudomonadati</taxon>
        <taxon>Pseudomonadota</taxon>
        <taxon>Gammaproteobacteria</taxon>
        <taxon>Enterobacterales</taxon>
        <taxon>Enterobacteriaceae</taxon>
        <taxon>Escherichia</taxon>
    </lineage>
</organism>
<protein>
    <recommendedName>
        <fullName evidence="1">Gamma-aminobutyraldehyde dehydrogenase</fullName>
        <shortName evidence="1">ABALDH</shortName>
        <ecNumber evidence="1">1.2.1.19</ecNumber>
    </recommendedName>
    <alternativeName>
        <fullName evidence="1">1-pyrroline dehydrogenase</fullName>
    </alternativeName>
    <alternativeName>
        <fullName evidence="1">4-aminobutanal dehydrogenase</fullName>
    </alternativeName>
    <alternativeName>
        <fullName evidence="1">5-aminopentanal dehydrogenase</fullName>
        <ecNumber evidence="1">1.2.1.-</ecNumber>
    </alternativeName>
</protein>
<name>ABDH_ECO8A</name>
<proteinExistence type="inferred from homology"/>
<keyword id="KW-0520">NAD</keyword>
<keyword id="KW-0560">Oxidoreductase</keyword>
<reference key="1">
    <citation type="journal article" date="2009" name="PLoS Genet.">
        <title>Organised genome dynamics in the Escherichia coli species results in highly diverse adaptive paths.</title>
        <authorList>
            <person name="Touchon M."/>
            <person name="Hoede C."/>
            <person name="Tenaillon O."/>
            <person name="Barbe V."/>
            <person name="Baeriswyl S."/>
            <person name="Bidet P."/>
            <person name="Bingen E."/>
            <person name="Bonacorsi S."/>
            <person name="Bouchier C."/>
            <person name="Bouvet O."/>
            <person name="Calteau A."/>
            <person name="Chiapello H."/>
            <person name="Clermont O."/>
            <person name="Cruveiller S."/>
            <person name="Danchin A."/>
            <person name="Diard M."/>
            <person name="Dossat C."/>
            <person name="Karoui M.E."/>
            <person name="Frapy E."/>
            <person name="Garry L."/>
            <person name="Ghigo J.M."/>
            <person name="Gilles A.M."/>
            <person name="Johnson J."/>
            <person name="Le Bouguenec C."/>
            <person name="Lescat M."/>
            <person name="Mangenot S."/>
            <person name="Martinez-Jehanne V."/>
            <person name="Matic I."/>
            <person name="Nassif X."/>
            <person name="Oztas S."/>
            <person name="Petit M.A."/>
            <person name="Pichon C."/>
            <person name="Rouy Z."/>
            <person name="Ruf C.S."/>
            <person name="Schneider D."/>
            <person name="Tourret J."/>
            <person name="Vacherie B."/>
            <person name="Vallenet D."/>
            <person name="Medigue C."/>
            <person name="Rocha E.P.C."/>
            <person name="Denamur E."/>
        </authorList>
    </citation>
    <scope>NUCLEOTIDE SEQUENCE [LARGE SCALE GENOMIC DNA]</scope>
    <source>
        <strain>IAI1</strain>
    </source>
</reference>
<sequence>MQHKLLINGELVSGEGEKQPVYNPATGDVLLEIAEASAEQVDAAVRAADAAFAEWGQTTPKVRAECLLKLADVIEENGQVFAELESRNCGKPLHSAFNDEIPAIVDVFRFFAGAARCLNGLAAGEYLEGHTSMIRRDPLGVVASIAPWNYPLMMAAWKLAPALAAGNCVVLKPSEITPLTALKLAELAKDIFPAGVINVLFGRGKTVGDPLTGHPKVRMVSLTGSIATGEHIISHTASSIKRTHMELGGKAPVIVFDDADIEAVVEGVRTFGYYNAGQDCTAACRIYAQKGIYDTLVEKLGAAVATLKSGAPDDESTELGPLSSLAHLERVSKAVEEAKATGHIKVITGGEKRKGNGYYYAPTLLAGALQDDAIVQKEVFGPVVSVTPFDNEEQVVNWANDSQYGLASSVWTKDVGRAHRVSARLQYGCTWVNTHFMLVSEMPHGGQKLSGYGKDMSLYGLEDYTVVRHVMVKH</sequence>
<dbReference type="EC" id="1.2.1.19" evidence="1"/>
<dbReference type="EC" id="1.2.1.-" evidence="1"/>
<dbReference type="EMBL" id="CU928160">
    <property type="protein sequence ID" value="CAQ98298.1"/>
    <property type="molecule type" value="Genomic_DNA"/>
</dbReference>
<dbReference type="RefSeq" id="WP_001163892.1">
    <property type="nucleotide sequence ID" value="NC_011741.1"/>
</dbReference>
<dbReference type="SMR" id="B7LZ33"/>
<dbReference type="GeneID" id="75202365"/>
<dbReference type="KEGG" id="ecr:ECIAI1_1440"/>
<dbReference type="HOGENOM" id="CLU_005391_1_0_6"/>
<dbReference type="UniPathway" id="UPA00188">
    <property type="reaction ID" value="UER00292"/>
</dbReference>
<dbReference type="GO" id="GO:0019145">
    <property type="term" value="F:aminobutyraldehyde dehydrogenase (NAD+) activity"/>
    <property type="evidence" value="ECO:0007669"/>
    <property type="project" value="UniProtKB-UniRule"/>
</dbReference>
<dbReference type="GO" id="GO:0051287">
    <property type="term" value="F:NAD binding"/>
    <property type="evidence" value="ECO:0007669"/>
    <property type="project" value="UniProtKB-UniRule"/>
</dbReference>
<dbReference type="GO" id="GO:0019477">
    <property type="term" value="P:L-lysine catabolic process"/>
    <property type="evidence" value="ECO:0007669"/>
    <property type="project" value="UniProtKB-UniRule"/>
</dbReference>
<dbReference type="GO" id="GO:0009447">
    <property type="term" value="P:putrescine catabolic process"/>
    <property type="evidence" value="ECO:0007669"/>
    <property type="project" value="UniProtKB-UniRule"/>
</dbReference>
<dbReference type="CDD" id="cd07092">
    <property type="entry name" value="ALDH_ABALDH-YdcW"/>
    <property type="match status" value="1"/>
</dbReference>
<dbReference type="FunFam" id="3.40.605.10:FF:000001">
    <property type="entry name" value="Aldehyde dehydrogenase 1"/>
    <property type="match status" value="1"/>
</dbReference>
<dbReference type="FunFam" id="3.40.309.10:FF:000010">
    <property type="entry name" value="Gamma-aminobutyraldehyde dehydrogenase"/>
    <property type="match status" value="1"/>
</dbReference>
<dbReference type="Gene3D" id="3.40.605.10">
    <property type="entry name" value="Aldehyde Dehydrogenase, Chain A, domain 1"/>
    <property type="match status" value="1"/>
</dbReference>
<dbReference type="Gene3D" id="3.40.309.10">
    <property type="entry name" value="Aldehyde Dehydrogenase, Chain A, domain 2"/>
    <property type="match status" value="1"/>
</dbReference>
<dbReference type="HAMAP" id="MF_01275">
    <property type="entry name" value="Aldedh_Prr"/>
    <property type="match status" value="1"/>
</dbReference>
<dbReference type="InterPro" id="IPR016161">
    <property type="entry name" value="Ald_DH/histidinol_DH"/>
</dbReference>
<dbReference type="InterPro" id="IPR016163">
    <property type="entry name" value="Ald_DH_C"/>
</dbReference>
<dbReference type="InterPro" id="IPR029510">
    <property type="entry name" value="Ald_DH_CS_GLU"/>
</dbReference>
<dbReference type="InterPro" id="IPR016162">
    <property type="entry name" value="Ald_DH_N"/>
</dbReference>
<dbReference type="InterPro" id="IPR015590">
    <property type="entry name" value="Aldehyde_DH_dom"/>
</dbReference>
<dbReference type="InterPro" id="IPR015657">
    <property type="entry name" value="Aminobutyraldehyde_DH"/>
</dbReference>
<dbReference type="InterPro" id="IPR017749">
    <property type="entry name" value="PatD"/>
</dbReference>
<dbReference type="NCBIfam" id="TIGR03374">
    <property type="entry name" value="ABALDH"/>
    <property type="match status" value="1"/>
</dbReference>
<dbReference type="NCBIfam" id="NF010000">
    <property type="entry name" value="PRK13473.1"/>
    <property type="match status" value="1"/>
</dbReference>
<dbReference type="PANTHER" id="PTHR11699">
    <property type="entry name" value="ALDEHYDE DEHYDROGENASE-RELATED"/>
    <property type="match status" value="1"/>
</dbReference>
<dbReference type="Pfam" id="PF00171">
    <property type="entry name" value="Aldedh"/>
    <property type="match status" value="1"/>
</dbReference>
<dbReference type="SUPFAM" id="SSF53720">
    <property type="entry name" value="ALDH-like"/>
    <property type="match status" value="1"/>
</dbReference>
<dbReference type="PROSITE" id="PS00687">
    <property type="entry name" value="ALDEHYDE_DEHYDR_GLU"/>
    <property type="match status" value="1"/>
</dbReference>
<accession>B7LZ33</accession>
<comment type="function">
    <text evidence="1">Catalyzes the oxidation 4-aminobutanal (gamma-aminobutyraldehyde) to 4-aminobutanoate (gamma-aminobutyrate or GABA). This is the second step in one of two pathways for putrescine degradation, where putrescine is converted into 4-aminobutanoate via 4-aminobutanal. Also functions as a 5-aminopentanal dehydrogenase in a a L-lysine degradation pathway to succinate that proceeds via cadaverine, glutarate and L-2-hydroxyglutarate.</text>
</comment>
<comment type="catalytic activity">
    <reaction evidence="1">
        <text>4-aminobutanal + NAD(+) + H2O = 4-aminobutanoate + NADH + 2 H(+)</text>
        <dbReference type="Rhea" id="RHEA:19105"/>
        <dbReference type="ChEBI" id="CHEBI:15377"/>
        <dbReference type="ChEBI" id="CHEBI:15378"/>
        <dbReference type="ChEBI" id="CHEBI:57540"/>
        <dbReference type="ChEBI" id="CHEBI:57945"/>
        <dbReference type="ChEBI" id="CHEBI:58264"/>
        <dbReference type="ChEBI" id="CHEBI:59888"/>
        <dbReference type="EC" id="1.2.1.19"/>
    </reaction>
    <physiologicalReaction direction="left-to-right" evidence="1">
        <dbReference type="Rhea" id="RHEA:19106"/>
    </physiologicalReaction>
</comment>
<comment type="catalytic activity">
    <reaction evidence="1">
        <text>5-aminopentanal + NAD(+) + H2O = 5-aminopentanoate + NADH + 2 H(+)</text>
        <dbReference type="Rhea" id="RHEA:61632"/>
        <dbReference type="ChEBI" id="CHEBI:15377"/>
        <dbReference type="ChEBI" id="CHEBI:15378"/>
        <dbReference type="ChEBI" id="CHEBI:57540"/>
        <dbReference type="ChEBI" id="CHEBI:57945"/>
        <dbReference type="ChEBI" id="CHEBI:144896"/>
        <dbReference type="ChEBI" id="CHEBI:356010"/>
    </reaction>
    <physiologicalReaction direction="left-to-right" evidence="1">
        <dbReference type="Rhea" id="RHEA:61633"/>
    </physiologicalReaction>
</comment>
<comment type="pathway">
    <text evidence="1">Amine and polyamine degradation; putrescine degradation; 4-aminobutanoate from 4-aminobutanal: step 1/1.</text>
</comment>
<comment type="pathway">
    <text evidence="1">Amino-acid degradation.</text>
</comment>
<comment type="subunit">
    <text evidence="1">Homotetramer.</text>
</comment>
<comment type="miscellaneous">
    <text evidence="1">4-aminobutanal can spontaneously cyclize to 1-pyrroline, and 5-aminopentanal to 1-piperideine.</text>
</comment>
<comment type="similarity">
    <text evidence="1">Belongs to the aldehyde dehydrogenase family. Gamma-aminobutyraldehyde dehydrogenase subfamily.</text>
</comment>